<sequence length="75" mass="8447">MSLINSHQSADSGLNIWSQLFFYTIVTASEWIGGLQKRRKGKGNGEILYEIIGRKLSLCFIRLSFLADIEVALVE</sequence>
<name>YXEJ_BACSU</name>
<dbReference type="EMBL" id="D45912">
    <property type="protein sequence ID" value="BAA08326.1"/>
    <property type="molecule type" value="Genomic_DNA"/>
</dbReference>
<dbReference type="EMBL" id="AL009126">
    <property type="protein sequence ID" value="CAB15989.2"/>
    <property type="molecule type" value="Genomic_DNA"/>
</dbReference>
<dbReference type="PIR" id="D70075">
    <property type="entry name" value="D70075"/>
</dbReference>
<dbReference type="RefSeq" id="NP_391832.2">
    <property type="nucleotide sequence ID" value="NC_000964.3"/>
</dbReference>
<dbReference type="RefSeq" id="WP_003243777.1">
    <property type="nucleotide sequence ID" value="NZ_OZ025638.1"/>
</dbReference>
<dbReference type="FunCoup" id="P54949">
    <property type="interactions" value="210"/>
</dbReference>
<dbReference type="STRING" id="224308.BSU39530"/>
<dbReference type="PaxDb" id="224308-BSU39530"/>
<dbReference type="EnsemblBacteria" id="CAB15989">
    <property type="protein sequence ID" value="CAB15989"/>
    <property type="gene ID" value="BSU_39530"/>
</dbReference>
<dbReference type="GeneID" id="937574"/>
<dbReference type="KEGG" id="bsu:BSU39530"/>
<dbReference type="PATRIC" id="fig|224308.179.peg.4278"/>
<dbReference type="InParanoid" id="P54949"/>
<dbReference type="OrthoDB" id="9863740at2"/>
<dbReference type="BioCyc" id="BSUB:BSU39530-MONOMER"/>
<dbReference type="Proteomes" id="UP000001570">
    <property type="component" value="Chromosome"/>
</dbReference>
<proteinExistence type="predicted"/>
<gene>
    <name type="primary">yxeJ</name>
    <name type="ordered locus">BSU39530</name>
    <name type="ORF">LP9B</name>
</gene>
<evidence type="ECO:0000305" key="1"/>
<organism>
    <name type="scientific">Bacillus subtilis (strain 168)</name>
    <dbReference type="NCBI Taxonomy" id="224308"/>
    <lineage>
        <taxon>Bacteria</taxon>
        <taxon>Bacillati</taxon>
        <taxon>Bacillota</taxon>
        <taxon>Bacilli</taxon>
        <taxon>Bacillales</taxon>
        <taxon>Bacillaceae</taxon>
        <taxon>Bacillus</taxon>
    </lineage>
</organism>
<feature type="chain" id="PRO_0000050016" description="Uncharacterized protein YxeJ">
    <location>
        <begin position="1"/>
        <end position="75"/>
    </location>
</feature>
<feature type="sequence conflict" description="In Ref. 1; BAA08326." evidence="1" ref="1">
    <original>K</original>
    <variation>I</variation>
    <location>
        <position position="55"/>
    </location>
</feature>
<accession>P54949</accession>
<protein>
    <recommendedName>
        <fullName>Uncharacterized protein YxeJ</fullName>
    </recommendedName>
</protein>
<keyword id="KW-1185">Reference proteome</keyword>
<reference key="1">
    <citation type="journal article" date="1995" name="DNA Res.">
        <title>Cloning and sequencing of a 23-kb region of the Bacillus subtilis genome between the iol and hut operons.</title>
        <authorList>
            <person name="Yoshida K."/>
            <person name="Fujimyra M."/>
            <person name="Yanai N."/>
            <person name="Fujita Y."/>
        </authorList>
    </citation>
    <scope>NUCLEOTIDE SEQUENCE [GENOMIC DNA]</scope>
    <source>
        <strain>168 / BGSC1A1</strain>
    </source>
</reference>
<reference key="2">
    <citation type="journal article" date="1997" name="Nature">
        <title>The complete genome sequence of the Gram-positive bacterium Bacillus subtilis.</title>
        <authorList>
            <person name="Kunst F."/>
            <person name="Ogasawara N."/>
            <person name="Moszer I."/>
            <person name="Albertini A.M."/>
            <person name="Alloni G."/>
            <person name="Azevedo V."/>
            <person name="Bertero M.G."/>
            <person name="Bessieres P."/>
            <person name="Bolotin A."/>
            <person name="Borchert S."/>
            <person name="Borriss R."/>
            <person name="Boursier L."/>
            <person name="Brans A."/>
            <person name="Braun M."/>
            <person name="Brignell S.C."/>
            <person name="Bron S."/>
            <person name="Brouillet S."/>
            <person name="Bruschi C.V."/>
            <person name="Caldwell B."/>
            <person name="Capuano V."/>
            <person name="Carter N.M."/>
            <person name="Choi S.-K."/>
            <person name="Codani J.-J."/>
            <person name="Connerton I.F."/>
            <person name="Cummings N.J."/>
            <person name="Daniel R.A."/>
            <person name="Denizot F."/>
            <person name="Devine K.M."/>
            <person name="Duesterhoeft A."/>
            <person name="Ehrlich S.D."/>
            <person name="Emmerson P.T."/>
            <person name="Entian K.-D."/>
            <person name="Errington J."/>
            <person name="Fabret C."/>
            <person name="Ferrari E."/>
            <person name="Foulger D."/>
            <person name="Fritz C."/>
            <person name="Fujita M."/>
            <person name="Fujita Y."/>
            <person name="Fuma S."/>
            <person name="Galizzi A."/>
            <person name="Galleron N."/>
            <person name="Ghim S.-Y."/>
            <person name="Glaser P."/>
            <person name="Goffeau A."/>
            <person name="Golightly E.J."/>
            <person name="Grandi G."/>
            <person name="Guiseppi G."/>
            <person name="Guy B.J."/>
            <person name="Haga K."/>
            <person name="Haiech J."/>
            <person name="Harwood C.R."/>
            <person name="Henaut A."/>
            <person name="Hilbert H."/>
            <person name="Holsappel S."/>
            <person name="Hosono S."/>
            <person name="Hullo M.-F."/>
            <person name="Itaya M."/>
            <person name="Jones L.-M."/>
            <person name="Joris B."/>
            <person name="Karamata D."/>
            <person name="Kasahara Y."/>
            <person name="Klaerr-Blanchard M."/>
            <person name="Klein C."/>
            <person name="Kobayashi Y."/>
            <person name="Koetter P."/>
            <person name="Koningstein G."/>
            <person name="Krogh S."/>
            <person name="Kumano M."/>
            <person name="Kurita K."/>
            <person name="Lapidus A."/>
            <person name="Lardinois S."/>
            <person name="Lauber J."/>
            <person name="Lazarevic V."/>
            <person name="Lee S.-M."/>
            <person name="Levine A."/>
            <person name="Liu H."/>
            <person name="Masuda S."/>
            <person name="Mauel C."/>
            <person name="Medigue C."/>
            <person name="Medina N."/>
            <person name="Mellado R.P."/>
            <person name="Mizuno M."/>
            <person name="Moestl D."/>
            <person name="Nakai S."/>
            <person name="Noback M."/>
            <person name="Noone D."/>
            <person name="O'Reilly M."/>
            <person name="Ogawa K."/>
            <person name="Ogiwara A."/>
            <person name="Oudega B."/>
            <person name="Park S.-H."/>
            <person name="Parro V."/>
            <person name="Pohl T.M."/>
            <person name="Portetelle D."/>
            <person name="Porwollik S."/>
            <person name="Prescott A.M."/>
            <person name="Presecan E."/>
            <person name="Pujic P."/>
            <person name="Purnelle B."/>
            <person name="Rapoport G."/>
            <person name="Rey M."/>
            <person name="Reynolds S."/>
            <person name="Rieger M."/>
            <person name="Rivolta C."/>
            <person name="Rocha E."/>
            <person name="Roche B."/>
            <person name="Rose M."/>
            <person name="Sadaie Y."/>
            <person name="Sato T."/>
            <person name="Scanlan E."/>
            <person name="Schleich S."/>
            <person name="Schroeter R."/>
            <person name="Scoffone F."/>
            <person name="Sekiguchi J."/>
            <person name="Sekowska A."/>
            <person name="Seror S.J."/>
            <person name="Serror P."/>
            <person name="Shin B.-S."/>
            <person name="Soldo B."/>
            <person name="Sorokin A."/>
            <person name="Tacconi E."/>
            <person name="Takagi T."/>
            <person name="Takahashi H."/>
            <person name="Takemaru K."/>
            <person name="Takeuchi M."/>
            <person name="Tamakoshi A."/>
            <person name="Tanaka T."/>
            <person name="Terpstra P."/>
            <person name="Tognoni A."/>
            <person name="Tosato V."/>
            <person name="Uchiyama S."/>
            <person name="Vandenbol M."/>
            <person name="Vannier F."/>
            <person name="Vassarotti A."/>
            <person name="Viari A."/>
            <person name="Wambutt R."/>
            <person name="Wedler E."/>
            <person name="Wedler H."/>
            <person name="Weitzenegger T."/>
            <person name="Winters P."/>
            <person name="Wipat A."/>
            <person name="Yamamoto H."/>
            <person name="Yamane K."/>
            <person name="Yasumoto K."/>
            <person name="Yata K."/>
            <person name="Yoshida K."/>
            <person name="Yoshikawa H.-F."/>
            <person name="Zumstein E."/>
            <person name="Yoshikawa H."/>
            <person name="Danchin A."/>
        </authorList>
    </citation>
    <scope>NUCLEOTIDE SEQUENCE [LARGE SCALE GENOMIC DNA]</scope>
    <source>
        <strain>168</strain>
    </source>
</reference>
<reference key="3">
    <citation type="journal article" date="2009" name="Microbiology">
        <title>From a consortium sequence to a unified sequence: the Bacillus subtilis 168 reference genome a decade later.</title>
        <authorList>
            <person name="Barbe V."/>
            <person name="Cruveiller S."/>
            <person name="Kunst F."/>
            <person name="Lenoble P."/>
            <person name="Meurice G."/>
            <person name="Sekowska A."/>
            <person name="Vallenet D."/>
            <person name="Wang T."/>
            <person name="Moszer I."/>
            <person name="Medigue C."/>
            <person name="Danchin A."/>
        </authorList>
    </citation>
    <scope>SEQUENCE REVISION TO 55</scope>
</reference>